<name>TATA_SHEHH</name>
<protein>
    <recommendedName>
        <fullName evidence="1">Sec-independent protein translocase protein TatA</fullName>
    </recommendedName>
</protein>
<dbReference type="EMBL" id="CP000931">
    <property type="protein sequence ID" value="ABZ78422.1"/>
    <property type="molecule type" value="Genomic_DNA"/>
</dbReference>
<dbReference type="RefSeq" id="WP_012278939.1">
    <property type="nucleotide sequence ID" value="NC_010334.1"/>
</dbReference>
<dbReference type="SMR" id="B0TJ19"/>
<dbReference type="STRING" id="458817.Shal_3882"/>
<dbReference type="KEGG" id="shl:Shal_3882"/>
<dbReference type="eggNOG" id="COG1826">
    <property type="taxonomic scope" value="Bacteria"/>
</dbReference>
<dbReference type="HOGENOM" id="CLU_086034_5_1_6"/>
<dbReference type="OrthoDB" id="7066617at2"/>
<dbReference type="Proteomes" id="UP000001317">
    <property type="component" value="Chromosome"/>
</dbReference>
<dbReference type="GO" id="GO:0033281">
    <property type="term" value="C:TAT protein transport complex"/>
    <property type="evidence" value="ECO:0007669"/>
    <property type="project" value="UniProtKB-UniRule"/>
</dbReference>
<dbReference type="GO" id="GO:0008320">
    <property type="term" value="F:protein transmembrane transporter activity"/>
    <property type="evidence" value="ECO:0007669"/>
    <property type="project" value="UniProtKB-UniRule"/>
</dbReference>
<dbReference type="GO" id="GO:0043953">
    <property type="term" value="P:protein transport by the Tat complex"/>
    <property type="evidence" value="ECO:0007669"/>
    <property type="project" value="UniProtKB-UniRule"/>
</dbReference>
<dbReference type="Gene3D" id="1.20.5.3310">
    <property type="match status" value="1"/>
</dbReference>
<dbReference type="HAMAP" id="MF_00236">
    <property type="entry name" value="TatA_E"/>
    <property type="match status" value="1"/>
</dbReference>
<dbReference type="InterPro" id="IPR003369">
    <property type="entry name" value="TatA/B/E"/>
</dbReference>
<dbReference type="InterPro" id="IPR006312">
    <property type="entry name" value="TatA/E"/>
</dbReference>
<dbReference type="NCBIfam" id="NF002813">
    <property type="entry name" value="PRK02958.1"/>
    <property type="match status" value="1"/>
</dbReference>
<dbReference type="NCBIfam" id="TIGR01411">
    <property type="entry name" value="tatAE"/>
    <property type="match status" value="1"/>
</dbReference>
<dbReference type="PANTHER" id="PTHR42982">
    <property type="entry name" value="SEC-INDEPENDENT PROTEIN TRANSLOCASE PROTEIN TATA"/>
    <property type="match status" value="1"/>
</dbReference>
<dbReference type="PANTHER" id="PTHR42982:SF1">
    <property type="entry name" value="SEC-INDEPENDENT PROTEIN TRANSLOCASE PROTEIN TATA"/>
    <property type="match status" value="1"/>
</dbReference>
<dbReference type="Pfam" id="PF02416">
    <property type="entry name" value="TatA_B_E"/>
    <property type="match status" value="1"/>
</dbReference>
<reference key="1">
    <citation type="submission" date="2008-01" db="EMBL/GenBank/DDBJ databases">
        <title>Complete sequence of Shewanella halifaxensis HAW-EB4.</title>
        <authorList>
            <consortium name="US DOE Joint Genome Institute"/>
            <person name="Copeland A."/>
            <person name="Lucas S."/>
            <person name="Lapidus A."/>
            <person name="Glavina del Rio T."/>
            <person name="Dalin E."/>
            <person name="Tice H."/>
            <person name="Bruce D."/>
            <person name="Goodwin L."/>
            <person name="Pitluck S."/>
            <person name="Sims D."/>
            <person name="Brettin T."/>
            <person name="Detter J.C."/>
            <person name="Han C."/>
            <person name="Kuske C.R."/>
            <person name="Schmutz J."/>
            <person name="Larimer F."/>
            <person name="Land M."/>
            <person name="Hauser L."/>
            <person name="Kyrpides N."/>
            <person name="Kim E."/>
            <person name="Zhao J.-S."/>
            <person name="Richardson P."/>
        </authorList>
    </citation>
    <scope>NUCLEOTIDE SEQUENCE [LARGE SCALE GENOMIC DNA]</scope>
    <source>
        <strain>HAW-EB4</strain>
    </source>
</reference>
<gene>
    <name evidence="1" type="primary">tatA</name>
    <name type="ordered locus">Shal_3882</name>
</gene>
<proteinExistence type="inferred from homology"/>
<accession>B0TJ19</accession>
<keyword id="KW-0997">Cell inner membrane</keyword>
<keyword id="KW-1003">Cell membrane</keyword>
<keyword id="KW-0472">Membrane</keyword>
<keyword id="KW-0653">Protein transport</keyword>
<keyword id="KW-0811">Translocation</keyword>
<keyword id="KW-0812">Transmembrane</keyword>
<keyword id="KW-1133">Transmembrane helix</keyword>
<keyword id="KW-0813">Transport</keyword>
<feature type="chain" id="PRO_1000078320" description="Sec-independent protein translocase protein TatA">
    <location>
        <begin position="1"/>
        <end position="95"/>
    </location>
</feature>
<feature type="transmembrane region" description="Helical" evidence="1">
    <location>
        <begin position="1"/>
        <end position="21"/>
    </location>
</feature>
<feature type="region of interest" description="Disordered" evidence="2">
    <location>
        <begin position="50"/>
        <end position="95"/>
    </location>
</feature>
<feature type="compositionally biased region" description="Basic and acidic residues" evidence="2">
    <location>
        <begin position="50"/>
        <end position="61"/>
    </location>
</feature>
<feature type="compositionally biased region" description="Low complexity" evidence="2">
    <location>
        <begin position="62"/>
        <end position="81"/>
    </location>
</feature>
<feature type="compositionally biased region" description="Basic and acidic residues" evidence="2">
    <location>
        <begin position="82"/>
        <end position="95"/>
    </location>
</feature>
<evidence type="ECO:0000255" key="1">
    <source>
        <dbReference type="HAMAP-Rule" id="MF_00236"/>
    </source>
</evidence>
<evidence type="ECO:0000256" key="2">
    <source>
        <dbReference type="SAM" id="MobiDB-lite"/>
    </source>
</evidence>
<comment type="function">
    <text evidence="1">Part of the twin-arginine translocation (Tat) system that transports large folded proteins containing a characteristic twin-arginine motif in their signal peptide across membranes. TatA could form the protein-conducting channel of the Tat system.</text>
</comment>
<comment type="subunit">
    <text evidence="1">The Tat system comprises two distinct complexes: a TatABC complex, containing multiple copies of TatA, TatB and TatC subunits, and a separate TatA complex, containing only TatA subunits. Substrates initially bind to the TatABC complex, which probably triggers association of the separate TatA complex to form the active translocon.</text>
</comment>
<comment type="subcellular location">
    <subcellularLocation>
        <location evidence="1">Cell inner membrane</location>
        <topology evidence="1">Single-pass membrane protein</topology>
    </subcellularLocation>
</comment>
<comment type="similarity">
    <text evidence="1">Belongs to the TatA/E family.</text>
</comment>
<sequence>MGGISIWQLLIIALIVVLLFGTKKLRSLGGDLGGAVKGFKNAMTSEEDKKALEDNAADKPAADAAKVTETAKVAETAPVAETAEKKAESKGKEQA</sequence>
<organism>
    <name type="scientific">Shewanella halifaxensis (strain HAW-EB4)</name>
    <dbReference type="NCBI Taxonomy" id="458817"/>
    <lineage>
        <taxon>Bacteria</taxon>
        <taxon>Pseudomonadati</taxon>
        <taxon>Pseudomonadota</taxon>
        <taxon>Gammaproteobacteria</taxon>
        <taxon>Alteromonadales</taxon>
        <taxon>Shewanellaceae</taxon>
        <taxon>Shewanella</taxon>
    </lineage>
</organism>